<dbReference type="EC" id="2.5.1.32"/>
<dbReference type="EMBL" id="Z37543">
    <property type="protein sequence ID" value="CAA85775.1"/>
    <property type="molecule type" value="mRNA"/>
</dbReference>
<dbReference type="PIR" id="S56668">
    <property type="entry name" value="S56668"/>
</dbReference>
<dbReference type="SMR" id="P49293"/>
<dbReference type="FunCoup" id="P49293">
    <property type="interactions" value="241"/>
</dbReference>
<dbReference type="eggNOG" id="KOG1459">
    <property type="taxonomic scope" value="Eukaryota"/>
</dbReference>
<dbReference type="InParanoid" id="P49293"/>
<dbReference type="UniPathway" id="UPA00799">
    <property type="reaction ID" value="UER00773"/>
</dbReference>
<dbReference type="Proteomes" id="UP000089565">
    <property type="component" value="Unplaced"/>
</dbReference>
<dbReference type="Proteomes" id="UP000596662">
    <property type="component" value="Unplaced"/>
</dbReference>
<dbReference type="GO" id="GO:0009507">
    <property type="term" value="C:chloroplast"/>
    <property type="evidence" value="ECO:0007669"/>
    <property type="project" value="UniProtKB-SubCell"/>
</dbReference>
<dbReference type="GO" id="GO:0046905">
    <property type="term" value="F:15-cis-phytoene synthase activity"/>
    <property type="evidence" value="ECO:0007669"/>
    <property type="project" value="RHEA"/>
</dbReference>
<dbReference type="GO" id="GO:0004311">
    <property type="term" value="F:geranylgeranyl diphosphate synthase activity"/>
    <property type="evidence" value="ECO:0007669"/>
    <property type="project" value="InterPro"/>
</dbReference>
<dbReference type="GO" id="GO:0051996">
    <property type="term" value="F:squalene synthase [NAD(P)H] activity"/>
    <property type="evidence" value="ECO:0007669"/>
    <property type="project" value="InterPro"/>
</dbReference>
<dbReference type="GO" id="GO:0016117">
    <property type="term" value="P:carotenoid biosynthetic process"/>
    <property type="evidence" value="ECO:0007669"/>
    <property type="project" value="UniProtKB-KW"/>
</dbReference>
<dbReference type="CDD" id="cd00683">
    <property type="entry name" value="Trans_IPPS_HH"/>
    <property type="match status" value="1"/>
</dbReference>
<dbReference type="FunFam" id="1.10.600.10:FF:000004">
    <property type="entry name" value="Phytoene synthase chloroplastic"/>
    <property type="match status" value="1"/>
</dbReference>
<dbReference type="Gene3D" id="1.10.600.10">
    <property type="entry name" value="Farnesyl Diphosphate Synthase"/>
    <property type="match status" value="1"/>
</dbReference>
<dbReference type="InterPro" id="IPR008949">
    <property type="entry name" value="Isoprenoid_synthase_dom_sf"/>
</dbReference>
<dbReference type="InterPro" id="IPR002060">
    <property type="entry name" value="Squ/phyt_synthse"/>
</dbReference>
<dbReference type="InterPro" id="IPR019845">
    <property type="entry name" value="Squalene/phytoene_synthase_CS"/>
</dbReference>
<dbReference type="InterPro" id="IPR044843">
    <property type="entry name" value="Trans_IPPS_bact-type"/>
</dbReference>
<dbReference type="InterPro" id="IPR033904">
    <property type="entry name" value="Trans_IPPS_HH"/>
</dbReference>
<dbReference type="PANTHER" id="PTHR31480">
    <property type="entry name" value="BIFUNCTIONAL LYCOPENE CYCLASE/PHYTOENE SYNTHASE"/>
    <property type="match status" value="1"/>
</dbReference>
<dbReference type="Pfam" id="PF00494">
    <property type="entry name" value="SQS_PSY"/>
    <property type="match status" value="1"/>
</dbReference>
<dbReference type="SFLD" id="SFLDS00005">
    <property type="entry name" value="Isoprenoid_Synthase_Type_I"/>
    <property type="match status" value="1"/>
</dbReference>
<dbReference type="SFLD" id="SFLDG01212">
    <property type="entry name" value="Phytoene_synthase_like"/>
    <property type="match status" value="1"/>
</dbReference>
<dbReference type="SUPFAM" id="SSF48576">
    <property type="entry name" value="Terpenoid synthases"/>
    <property type="match status" value="1"/>
</dbReference>
<dbReference type="PROSITE" id="PS01044">
    <property type="entry name" value="SQUALEN_PHYTOEN_SYN_1"/>
    <property type="match status" value="1"/>
</dbReference>
<dbReference type="PROSITE" id="PS01045">
    <property type="entry name" value="SQUALEN_PHYTOEN_SYN_2"/>
    <property type="match status" value="1"/>
</dbReference>
<comment type="function">
    <text>Catalyzes the reaction from prephytoene diphosphate to phytoene.</text>
</comment>
<comment type="catalytic activity">
    <reaction>
        <text>2 (2E,6E,10E)-geranylgeranyl diphosphate = 15-cis-phytoene + 2 diphosphate</text>
        <dbReference type="Rhea" id="RHEA:34475"/>
        <dbReference type="ChEBI" id="CHEBI:27787"/>
        <dbReference type="ChEBI" id="CHEBI:33019"/>
        <dbReference type="ChEBI" id="CHEBI:58756"/>
        <dbReference type="EC" id="2.5.1.32"/>
    </reaction>
</comment>
<comment type="pathway">
    <text>Carotenoid biosynthesis; phytoene biosynthesis; all-trans-phytoene from geranylgeranyl diphosphate: step 1/1.</text>
</comment>
<comment type="subunit">
    <text evidence="1">Monomer.</text>
</comment>
<comment type="subcellular location">
    <subcellularLocation>
        <location>Plastid</location>
        <location>Chloroplast</location>
    </subcellularLocation>
</comment>
<comment type="similarity">
    <text evidence="3">Belongs to the phytoene/squalene synthase family.</text>
</comment>
<organism>
    <name type="scientific">Cucumis melo</name>
    <name type="common">Muskmelon</name>
    <dbReference type="NCBI Taxonomy" id="3656"/>
    <lineage>
        <taxon>Eukaryota</taxon>
        <taxon>Viridiplantae</taxon>
        <taxon>Streptophyta</taxon>
        <taxon>Embryophyta</taxon>
        <taxon>Tracheophyta</taxon>
        <taxon>Spermatophyta</taxon>
        <taxon>Magnoliopsida</taxon>
        <taxon>eudicotyledons</taxon>
        <taxon>Gunneridae</taxon>
        <taxon>Pentapetalae</taxon>
        <taxon>rosids</taxon>
        <taxon>fabids</taxon>
        <taxon>Cucurbitales</taxon>
        <taxon>Cucurbitaceae</taxon>
        <taxon>Benincaseae</taxon>
        <taxon>Cucumis</taxon>
    </lineage>
</organism>
<name>PSY_CUCME</name>
<evidence type="ECO:0000250" key="1"/>
<evidence type="ECO:0000255" key="2"/>
<evidence type="ECO:0000305" key="3"/>
<keyword id="KW-0125">Carotenoid biosynthesis</keyword>
<keyword id="KW-0150">Chloroplast</keyword>
<keyword id="KW-0414">Isoprene biosynthesis</keyword>
<keyword id="KW-0934">Plastid</keyword>
<keyword id="KW-1185">Reference proteome</keyword>
<keyword id="KW-0808">Transferase</keyword>
<keyword id="KW-0809">Transit peptide</keyword>
<sequence length="422" mass="47392">MSLASSLVVSSNVELSPSSFGFLDSVRDGPQIPDSFRFSSRNRVPNLINKKQKWGNHSHSTELKYPILHESGYGSVIVASMVANPAGEIAVSAEQKVYNVVMKQAALVKRQLRTAGELDVKPDIVLPGTLSLLNEAYDRCGEVCAEYAKTFYLGTMLMTPERQKAIWAIYVWCRRTDELVDGPNASHITPTALDRWEARLEELFQGRPFDMLDAALADTVTKFPVDIQPFKDMIEGMRMDLRKSRYKNFDELYLYCYYVAGTVGLMSVPVMGIAPESQASTESVYNAALALGIANQAPPNILRDVGEDARRGRIYLPQDELAQAGLSDEDIFAGRVTDKWRNFMKNQIKRARMFFDEAEKGVLELNKASRWPVWASLLLYRQILDEIEANDYDNFTKRAYVSKAKKILALPMAYGRALLGPS</sequence>
<reference key="1">
    <citation type="journal article" date="1995" name="Plant Mol. Biol.">
        <title>Isolation and characterisation of a melon cDNA clone encoding phytoene synthase.</title>
        <authorList>
            <person name="Karvouni Z."/>
            <person name="John I."/>
            <person name="Taylor J.E."/>
            <person name="Watson C.F."/>
            <person name="Turner A.J."/>
            <person name="Grierson D."/>
        </authorList>
    </citation>
    <scope>NUCLEOTIDE SEQUENCE [MRNA]</scope>
    <source>
        <strain>cv. Cantaloup Charentais</strain>
        <tissue>Pericarp</tissue>
    </source>
</reference>
<proteinExistence type="evidence at transcript level"/>
<accession>P49293</accession>
<feature type="transit peptide" description="Chloroplast" evidence="2">
    <location>
        <begin position="1"/>
        <end position="83"/>
    </location>
</feature>
<feature type="chain" id="PRO_0000029854" description="Phytoene synthase, chloroplastic">
    <location>
        <begin position="84"/>
        <end position="422"/>
    </location>
</feature>
<gene>
    <name type="primary">PSY</name>
</gene>
<protein>
    <recommendedName>
        <fullName>Phytoene synthase, chloroplastic</fullName>
        <ecNumber>2.5.1.32</ecNumber>
    </recommendedName>
    <alternativeName>
        <fullName>MEL5</fullName>
    </alternativeName>
</protein>